<gene>
    <name evidence="1" type="primary">rny</name>
    <name type="ordered locus">CT0734</name>
</gene>
<proteinExistence type="inferred from homology"/>
<reference key="1">
    <citation type="journal article" date="2002" name="Proc. Natl. Acad. Sci. U.S.A.">
        <title>The complete genome sequence of Chlorobium tepidum TLS, a photosynthetic, anaerobic, green-sulfur bacterium.</title>
        <authorList>
            <person name="Eisen J.A."/>
            <person name="Nelson K.E."/>
            <person name="Paulsen I.T."/>
            <person name="Heidelberg J.F."/>
            <person name="Wu M."/>
            <person name="Dodson R.J."/>
            <person name="DeBoy R.T."/>
            <person name="Gwinn M.L."/>
            <person name="Nelson W.C."/>
            <person name="Haft D.H."/>
            <person name="Hickey E.K."/>
            <person name="Peterson J.D."/>
            <person name="Durkin A.S."/>
            <person name="Kolonay J.F."/>
            <person name="Yang F."/>
            <person name="Holt I.E."/>
            <person name="Umayam L.A."/>
            <person name="Mason T.M."/>
            <person name="Brenner M."/>
            <person name="Shea T.P."/>
            <person name="Parksey D.S."/>
            <person name="Nierman W.C."/>
            <person name="Feldblyum T.V."/>
            <person name="Hansen C.L."/>
            <person name="Craven M.B."/>
            <person name="Radune D."/>
            <person name="Vamathevan J.J."/>
            <person name="Khouri H.M."/>
            <person name="White O."/>
            <person name="Gruber T.M."/>
            <person name="Ketchum K.A."/>
            <person name="Venter J.C."/>
            <person name="Tettelin H."/>
            <person name="Bryant D.A."/>
            <person name="Fraser C.M."/>
        </authorList>
    </citation>
    <scope>NUCLEOTIDE SEQUENCE [LARGE SCALE GENOMIC DNA]</scope>
    <source>
        <strain>ATCC 49652 / DSM 12025 / NBRC 103806 / TLS</strain>
    </source>
</reference>
<sequence length="524" mass="58686">MGIVINLFLIIAASIVFFVVGFYIGRFFLERIGTTKVLEAEERAVQVIQEAQKEANDYKELKVNEVNQEWKKRKREFDSEVTIKNNKFAQLQKQIRQKEVTLANQMRDIKETEKKLQEQREELKHQTQNVQNRSAELEKTILEQNQRLESISNLTAEEARQMLIDNMIAKAREEAAETVHQIHEEATQKADRIAEKIMLTAIQRISFEQATESALSVVHIQSDELKGRIIGREGRNIKAFENATGVDIIVDDTPEVVILSCFDPLRREMAKLTLQKLLVDGIIHPVAIEKAYQDAKKEIEDVIMSSGEEAISSLQIPDMPAEIVNLIGKMRFHTVYGQNLLQHSREVAMLAGLMAAELKLDAKQAKRAGLLHDIGLVLPETEMPHALAGMEFLKKFNMSPVVLNAIGAHHGEVEKASPIADLVDAANIVSLSRPGARGAVTAEGNVKRLESLEEIARTFPGVIKTYALQAGREIRVIVEGDNVSDSQADVLAHDIASKIESEAQYPGQIKVTILREKRSVAFAK</sequence>
<dbReference type="EC" id="3.1.-.-" evidence="1"/>
<dbReference type="EMBL" id="AE006470">
    <property type="protein sequence ID" value="AAM71971.1"/>
    <property type="molecule type" value="Genomic_DNA"/>
</dbReference>
<dbReference type="RefSeq" id="NP_661629.1">
    <property type="nucleotide sequence ID" value="NC_002932.3"/>
</dbReference>
<dbReference type="RefSeq" id="WP_010932416.1">
    <property type="nucleotide sequence ID" value="NC_002932.3"/>
</dbReference>
<dbReference type="SMR" id="Q8KEF5"/>
<dbReference type="STRING" id="194439.CT0734"/>
<dbReference type="DNASU" id="1007792"/>
<dbReference type="EnsemblBacteria" id="AAM71971">
    <property type="protein sequence ID" value="AAM71971"/>
    <property type="gene ID" value="CT0734"/>
</dbReference>
<dbReference type="KEGG" id="cte:CT0734"/>
<dbReference type="PATRIC" id="fig|194439.7.peg.671"/>
<dbReference type="eggNOG" id="COG1418">
    <property type="taxonomic scope" value="Bacteria"/>
</dbReference>
<dbReference type="HOGENOM" id="CLU_028328_1_0_10"/>
<dbReference type="OrthoDB" id="9803205at2"/>
<dbReference type="Proteomes" id="UP000001007">
    <property type="component" value="Chromosome"/>
</dbReference>
<dbReference type="GO" id="GO:0005886">
    <property type="term" value="C:plasma membrane"/>
    <property type="evidence" value="ECO:0007669"/>
    <property type="project" value="UniProtKB-SubCell"/>
</dbReference>
<dbReference type="GO" id="GO:0003723">
    <property type="term" value="F:RNA binding"/>
    <property type="evidence" value="ECO:0007669"/>
    <property type="project" value="UniProtKB-UniRule"/>
</dbReference>
<dbReference type="GO" id="GO:0004521">
    <property type="term" value="F:RNA endonuclease activity"/>
    <property type="evidence" value="ECO:0007669"/>
    <property type="project" value="UniProtKB-UniRule"/>
</dbReference>
<dbReference type="GO" id="GO:0006402">
    <property type="term" value="P:mRNA catabolic process"/>
    <property type="evidence" value="ECO:0007669"/>
    <property type="project" value="UniProtKB-UniRule"/>
</dbReference>
<dbReference type="CDD" id="cd22431">
    <property type="entry name" value="KH-I_RNaseY"/>
    <property type="match status" value="1"/>
</dbReference>
<dbReference type="Gene3D" id="1.10.3210.10">
    <property type="entry name" value="Hypothetical protein af1432"/>
    <property type="match status" value="1"/>
</dbReference>
<dbReference type="Gene3D" id="3.30.1370.10">
    <property type="entry name" value="K Homology domain, type 1"/>
    <property type="match status" value="1"/>
</dbReference>
<dbReference type="HAMAP" id="MF_00335">
    <property type="entry name" value="RNase_Y"/>
    <property type="match status" value="1"/>
</dbReference>
<dbReference type="InterPro" id="IPR003607">
    <property type="entry name" value="HD/PDEase_dom"/>
</dbReference>
<dbReference type="InterPro" id="IPR006674">
    <property type="entry name" value="HD_domain"/>
</dbReference>
<dbReference type="InterPro" id="IPR006675">
    <property type="entry name" value="HDIG_dom"/>
</dbReference>
<dbReference type="InterPro" id="IPR004087">
    <property type="entry name" value="KH_dom"/>
</dbReference>
<dbReference type="InterPro" id="IPR004088">
    <property type="entry name" value="KH_dom_type_1"/>
</dbReference>
<dbReference type="InterPro" id="IPR036612">
    <property type="entry name" value="KH_dom_type_1_sf"/>
</dbReference>
<dbReference type="InterPro" id="IPR017705">
    <property type="entry name" value="Ribonuclease_Y"/>
</dbReference>
<dbReference type="InterPro" id="IPR022711">
    <property type="entry name" value="RNase_Y_N"/>
</dbReference>
<dbReference type="NCBIfam" id="TIGR00277">
    <property type="entry name" value="HDIG"/>
    <property type="match status" value="1"/>
</dbReference>
<dbReference type="NCBIfam" id="TIGR03319">
    <property type="entry name" value="RNase_Y"/>
    <property type="match status" value="1"/>
</dbReference>
<dbReference type="PANTHER" id="PTHR12826">
    <property type="entry name" value="RIBONUCLEASE Y"/>
    <property type="match status" value="1"/>
</dbReference>
<dbReference type="PANTHER" id="PTHR12826:SF15">
    <property type="entry name" value="RIBONUCLEASE Y"/>
    <property type="match status" value="1"/>
</dbReference>
<dbReference type="Pfam" id="PF01966">
    <property type="entry name" value="HD"/>
    <property type="match status" value="1"/>
</dbReference>
<dbReference type="Pfam" id="PF00013">
    <property type="entry name" value="KH_1"/>
    <property type="match status" value="1"/>
</dbReference>
<dbReference type="Pfam" id="PF12072">
    <property type="entry name" value="RNase_Y_N"/>
    <property type="match status" value="1"/>
</dbReference>
<dbReference type="SMART" id="SM00471">
    <property type="entry name" value="HDc"/>
    <property type="match status" value="1"/>
</dbReference>
<dbReference type="SMART" id="SM00322">
    <property type="entry name" value="KH"/>
    <property type="match status" value="1"/>
</dbReference>
<dbReference type="SUPFAM" id="SSF54791">
    <property type="entry name" value="Eukaryotic type KH-domain (KH-domain type I)"/>
    <property type="match status" value="1"/>
</dbReference>
<dbReference type="SUPFAM" id="SSF109604">
    <property type="entry name" value="HD-domain/PDEase-like"/>
    <property type="match status" value="1"/>
</dbReference>
<dbReference type="PROSITE" id="PS51831">
    <property type="entry name" value="HD"/>
    <property type="match status" value="1"/>
</dbReference>
<dbReference type="PROSITE" id="PS50084">
    <property type="entry name" value="KH_TYPE_1"/>
    <property type="match status" value="1"/>
</dbReference>
<protein>
    <recommendedName>
        <fullName evidence="1">Ribonuclease Y</fullName>
        <shortName evidence="1">RNase Y</shortName>
        <ecNumber evidence="1">3.1.-.-</ecNumber>
    </recommendedName>
</protein>
<keyword id="KW-1003">Cell membrane</keyword>
<keyword id="KW-0255">Endonuclease</keyword>
<keyword id="KW-0378">Hydrolase</keyword>
<keyword id="KW-0472">Membrane</keyword>
<keyword id="KW-0540">Nuclease</keyword>
<keyword id="KW-1185">Reference proteome</keyword>
<keyword id="KW-0694">RNA-binding</keyword>
<keyword id="KW-0812">Transmembrane</keyword>
<keyword id="KW-1133">Transmembrane helix</keyword>
<organism>
    <name type="scientific">Chlorobaculum tepidum (strain ATCC 49652 / DSM 12025 / NBRC 103806 / TLS)</name>
    <name type="common">Chlorobium tepidum</name>
    <dbReference type="NCBI Taxonomy" id="194439"/>
    <lineage>
        <taxon>Bacteria</taxon>
        <taxon>Pseudomonadati</taxon>
        <taxon>Chlorobiota</taxon>
        <taxon>Chlorobiia</taxon>
        <taxon>Chlorobiales</taxon>
        <taxon>Chlorobiaceae</taxon>
        <taxon>Chlorobaculum</taxon>
    </lineage>
</organism>
<feature type="chain" id="PRO_0000163769" description="Ribonuclease Y">
    <location>
        <begin position="1"/>
        <end position="524"/>
    </location>
</feature>
<feature type="transmembrane region" description="Helical" evidence="1">
    <location>
        <begin position="2"/>
        <end position="22"/>
    </location>
</feature>
<feature type="domain" description="KH" evidence="1">
    <location>
        <begin position="214"/>
        <end position="299"/>
    </location>
</feature>
<feature type="domain" description="HD" evidence="2">
    <location>
        <begin position="340"/>
        <end position="432"/>
    </location>
</feature>
<accession>Q8KEF5</accession>
<comment type="function">
    <text evidence="1">Endoribonuclease that initiates mRNA decay.</text>
</comment>
<comment type="subcellular location">
    <subcellularLocation>
        <location evidence="1">Cell membrane</location>
        <topology evidence="1">Single-pass membrane protein</topology>
    </subcellularLocation>
</comment>
<comment type="similarity">
    <text evidence="1">Belongs to the RNase Y family.</text>
</comment>
<evidence type="ECO:0000255" key="1">
    <source>
        <dbReference type="HAMAP-Rule" id="MF_00335"/>
    </source>
</evidence>
<evidence type="ECO:0000255" key="2">
    <source>
        <dbReference type="PROSITE-ProRule" id="PRU01175"/>
    </source>
</evidence>
<name>RNY_CHLTE</name>